<gene>
    <name type="ordered locus">SCO2081</name>
    <name type="ORF">SC4A10.14c</name>
</gene>
<feature type="chain" id="PRO_0000163182" description="Purine nucleoside phosphorylase SCO2081">
    <location>
        <begin position="1"/>
        <end position="242"/>
    </location>
</feature>
<feature type="binding site" evidence="2">
    <location>
        <position position="68"/>
    </location>
    <ligand>
        <name>Zn(2+)</name>
        <dbReference type="ChEBI" id="CHEBI:29105"/>
        <note>catalytic</note>
    </ligand>
</feature>
<feature type="binding site" evidence="2">
    <location>
        <position position="106"/>
    </location>
    <ligand>
        <name>Zn(2+)</name>
        <dbReference type="ChEBI" id="CHEBI:29105"/>
        <note>catalytic</note>
    </ligand>
</feature>
<feature type="binding site" evidence="2">
    <location>
        <position position="123"/>
    </location>
    <ligand>
        <name>Zn(2+)</name>
        <dbReference type="ChEBI" id="CHEBI:29105"/>
        <note>catalytic</note>
    </ligand>
</feature>
<keyword id="KW-0186">Copper</keyword>
<keyword id="KW-0378">Hydrolase</keyword>
<keyword id="KW-0479">Metal-binding</keyword>
<keyword id="KW-0560">Oxidoreductase</keyword>
<keyword id="KW-1185">Reference proteome</keyword>
<keyword id="KW-0808">Transferase</keyword>
<keyword id="KW-0862">Zinc</keyword>
<protein>
    <recommendedName>
        <fullName>Purine nucleoside phosphorylase SCO2081</fullName>
        <ecNumber evidence="2">2.4.2.1</ecNumber>
    </recommendedName>
    <alternativeName>
        <fullName>Adenosine deaminase SCO2081</fullName>
        <ecNumber evidence="2">3.5.4.4</ecNumber>
    </alternativeName>
    <alternativeName>
        <fullName>S-methyl-5'-thioadenosine phosphorylase SCO2081</fullName>
        <ecNumber evidence="2">2.4.2.28</ecNumber>
    </alternativeName>
</protein>
<evidence type="ECO:0000250" key="1">
    <source>
        <dbReference type="UniProtKB" id="P33644"/>
    </source>
</evidence>
<evidence type="ECO:0000250" key="2">
    <source>
        <dbReference type="UniProtKB" id="P84138"/>
    </source>
</evidence>
<evidence type="ECO:0000250" key="3">
    <source>
        <dbReference type="UniProtKB" id="Q1EIR0"/>
    </source>
</evidence>
<evidence type="ECO:0000305" key="4"/>
<sequence length="242" mass="25144">MIGQRDTVNGAHFGFTDRWGGVSAVPYEELNLGGAVGDDPGAVTANRELAAKSLGVDPARVVWMNQVHGADVAVVDAPWGDRPVPRVDAVVTAERGLALAVLTADCVPVLLADPVSGVAAAAHAGRPGLVAGVVPAAVRAMAELGADPARIVARTGPAVCGRCYEVPEEMRAEVAAVEPAAYAETGWGTPALDVSAGVHAQLERLGVHDRAQSPVCTRESADHFSYRRDRTTGRLAGYVWLD</sequence>
<dbReference type="EC" id="2.4.2.1" evidence="2"/>
<dbReference type="EC" id="3.5.4.4" evidence="2"/>
<dbReference type="EC" id="2.4.2.28" evidence="2"/>
<dbReference type="EMBL" id="AL939111">
    <property type="protein sequence ID" value="CAB51990.1"/>
    <property type="molecule type" value="Genomic_DNA"/>
</dbReference>
<dbReference type="EMBL" id="U10879">
    <property type="protein sequence ID" value="AAD10534.1"/>
    <property type="molecule type" value="Genomic_DNA"/>
</dbReference>
<dbReference type="PIR" id="T34951">
    <property type="entry name" value="T34951"/>
</dbReference>
<dbReference type="RefSeq" id="NP_626340.1">
    <property type="nucleotide sequence ID" value="NC_003888.3"/>
</dbReference>
<dbReference type="SMR" id="P45497"/>
<dbReference type="FunCoup" id="P45497">
    <property type="interactions" value="87"/>
</dbReference>
<dbReference type="STRING" id="100226.gene:17759679"/>
<dbReference type="PaxDb" id="100226-SCO2081"/>
<dbReference type="KEGG" id="sco:SCO2081"/>
<dbReference type="PATRIC" id="fig|100226.15.peg.2114"/>
<dbReference type="eggNOG" id="COG1496">
    <property type="taxonomic scope" value="Bacteria"/>
</dbReference>
<dbReference type="HOGENOM" id="CLU_065784_3_1_11"/>
<dbReference type="InParanoid" id="P45497"/>
<dbReference type="OrthoDB" id="4279at2"/>
<dbReference type="PhylomeDB" id="P45497"/>
<dbReference type="Proteomes" id="UP000001973">
    <property type="component" value="Chromosome"/>
</dbReference>
<dbReference type="GO" id="GO:0004000">
    <property type="term" value="F:adenosine deaminase activity"/>
    <property type="evidence" value="ECO:0007669"/>
    <property type="project" value="RHEA"/>
</dbReference>
<dbReference type="GO" id="GO:0005507">
    <property type="term" value="F:copper ion binding"/>
    <property type="evidence" value="ECO:0000318"/>
    <property type="project" value="GO_Central"/>
</dbReference>
<dbReference type="GO" id="GO:0016491">
    <property type="term" value="F:oxidoreductase activity"/>
    <property type="evidence" value="ECO:0007669"/>
    <property type="project" value="UniProtKB-KW"/>
</dbReference>
<dbReference type="GO" id="GO:0017061">
    <property type="term" value="F:S-methyl-5-thioadenosine phosphorylase activity"/>
    <property type="evidence" value="ECO:0007669"/>
    <property type="project" value="UniProtKB-EC"/>
</dbReference>
<dbReference type="CDD" id="cd16833">
    <property type="entry name" value="YfiH"/>
    <property type="match status" value="1"/>
</dbReference>
<dbReference type="FunFam" id="3.60.140.10:FF:000003">
    <property type="entry name" value="Polyphenol oxidase"/>
    <property type="match status" value="1"/>
</dbReference>
<dbReference type="Gene3D" id="3.60.140.10">
    <property type="entry name" value="CNF1/YfiH-like putative cysteine hydrolases"/>
    <property type="match status" value="1"/>
</dbReference>
<dbReference type="InterPro" id="IPR003730">
    <property type="entry name" value="Cu_polyphenol_OxRdtase"/>
</dbReference>
<dbReference type="InterPro" id="IPR038371">
    <property type="entry name" value="Cu_polyphenol_OxRdtase_sf"/>
</dbReference>
<dbReference type="InterPro" id="IPR011324">
    <property type="entry name" value="Cytotoxic_necrot_fac-like_cat"/>
</dbReference>
<dbReference type="NCBIfam" id="TIGR00726">
    <property type="entry name" value="peptidoglycan editing factor PgeF"/>
    <property type="match status" value="1"/>
</dbReference>
<dbReference type="PANTHER" id="PTHR30616:SF2">
    <property type="entry name" value="PURINE NUCLEOSIDE PHOSPHORYLASE LACC1"/>
    <property type="match status" value="1"/>
</dbReference>
<dbReference type="PANTHER" id="PTHR30616">
    <property type="entry name" value="UNCHARACTERIZED PROTEIN YFIH"/>
    <property type="match status" value="1"/>
</dbReference>
<dbReference type="Pfam" id="PF02578">
    <property type="entry name" value="Cu-oxidase_4"/>
    <property type="match status" value="1"/>
</dbReference>
<dbReference type="SUPFAM" id="SSF64438">
    <property type="entry name" value="CNF1/YfiH-like putative cysteine hydrolases"/>
    <property type="match status" value="1"/>
</dbReference>
<proteinExistence type="inferred from homology"/>
<name>PURNU_STRCO</name>
<organism>
    <name type="scientific">Streptomyces coelicolor (strain ATCC BAA-471 / A3(2) / M145)</name>
    <dbReference type="NCBI Taxonomy" id="100226"/>
    <lineage>
        <taxon>Bacteria</taxon>
        <taxon>Bacillati</taxon>
        <taxon>Actinomycetota</taxon>
        <taxon>Actinomycetes</taxon>
        <taxon>Kitasatosporales</taxon>
        <taxon>Streptomycetaceae</taxon>
        <taxon>Streptomyces</taxon>
        <taxon>Streptomyces albidoflavus group</taxon>
    </lineage>
</organism>
<reference key="1">
    <citation type="journal article" date="2002" name="Nature">
        <title>Complete genome sequence of the model actinomycete Streptomyces coelicolor A3(2).</title>
        <authorList>
            <person name="Bentley S.D."/>
            <person name="Chater K.F."/>
            <person name="Cerdeno-Tarraga A.-M."/>
            <person name="Challis G.L."/>
            <person name="Thomson N.R."/>
            <person name="James K.D."/>
            <person name="Harris D.E."/>
            <person name="Quail M.A."/>
            <person name="Kieser H."/>
            <person name="Harper D."/>
            <person name="Bateman A."/>
            <person name="Brown S."/>
            <person name="Chandra G."/>
            <person name="Chen C.W."/>
            <person name="Collins M."/>
            <person name="Cronin A."/>
            <person name="Fraser A."/>
            <person name="Goble A."/>
            <person name="Hidalgo J."/>
            <person name="Hornsby T."/>
            <person name="Howarth S."/>
            <person name="Huang C.-H."/>
            <person name="Kieser T."/>
            <person name="Larke L."/>
            <person name="Murphy L.D."/>
            <person name="Oliver K."/>
            <person name="O'Neil S."/>
            <person name="Rabbinowitsch E."/>
            <person name="Rajandream M.A."/>
            <person name="Rutherford K.M."/>
            <person name="Rutter S."/>
            <person name="Seeger K."/>
            <person name="Saunders D."/>
            <person name="Sharp S."/>
            <person name="Squares R."/>
            <person name="Squares S."/>
            <person name="Taylor K."/>
            <person name="Warren T."/>
            <person name="Wietzorrek A."/>
            <person name="Woodward J.R."/>
            <person name="Barrell B.G."/>
            <person name="Parkhill J."/>
            <person name="Hopwood D.A."/>
        </authorList>
    </citation>
    <scope>NUCLEOTIDE SEQUENCE [LARGE SCALE GENOMIC DNA]</scope>
    <source>
        <strain>ATCC BAA-471 / A3(2) / M145</strain>
    </source>
</reference>
<reference key="2">
    <citation type="journal article" date="1994" name="Mol. Microbiol.">
        <title>Growth and viability of Streptomyces coelicolor mutant for the cell division gene ftsZ.</title>
        <authorList>
            <person name="McCormick J.R."/>
            <person name="Su E.P."/>
            <person name="Driks A."/>
            <person name="Losick R."/>
        </authorList>
    </citation>
    <scope>NUCLEOTIDE SEQUENCE [GENOMIC DNA] OF 1-60</scope>
    <source>
        <strain>A3(2) / NRRL B-16638</strain>
    </source>
</reference>
<comment type="function">
    <text evidence="2">Purine nucleoside enzyme that catalyzes the phosphorolysis of adenosine and inosine nucleosides, yielding D-ribose 1-phosphate and the respective free bases, adenine and hypoxanthine. Also catalyzes the phosphorolysis of S-methyl-5'-thioadenosine into adenine and S-methyl-5-thio-alpha-D-ribose 1-phosphate. Also has adenosine deaminase activity.</text>
</comment>
<comment type="catalytic activity">
    <reaction evidence="2">
        <text>adenosine + phosphate = alpha-D-ribose 1-phosphate + adenine</text>
        <dbReference type="Rhea" id="RHEA:27642"/>
        <dbReference type="ChEBI" id="CHEBI:16335"/>
        <dbReference type="ChEBI" id="CHEBI:16708"/>
        <dbReference type="ChEBI" id="CHEBI:43474"/>
        <dbReference type="ChEBI" id="CHEBI:57720"/>
        <dbReference type="EC" id="2.4.2.1"/>
    </reaction>
    <physiologicalReaction direction="left-to-right" evidence="2">
        <dbReference type="Rhea" id="RHEA:27643"/>
    </physiologicalReaction>
</comment>
<comment type="catalytic activity">
    <reaction evidence="2">
        <text>S-methyl-5'-thioadenosine + phosphate = 5-(methylsulfanyl)-alpha-D-ribose 1-phosphate + adenine</text>
        <dbReference type="Rhea" id="RHEA:11852"/>
        <dbReference type="ChEBI" id="CHEBI:16708"/>
        <dbReference type="ChEBI" id="CHEBI:17509"/>
        <dbReference type="ChEBI" id="CHEBI:43474"/>
        <dbReference type="ChEBI" id="CHEBI:58533"/>
        <dbReference type="EC" id="2.4.2.28"/>
    </reaction>
    <physiologicalReaction direction="left-to-right" evidence="2">
        <dbReference type="Rhea" id="RHEA:11853"/>
    </physiologicalReaction>
</comment>
<comment type="catalytic activity">
    <reaction evidence="2">
        <text>inosine + phosphate = alpha-D-ribose 1-phosphate + hypoxanthine</text>
        <dbReference type="Rhea" id="RHEA:27646"/>
        <dbReference type="ChEBI" id="CHEBI:17368"/>
        <dbReference type="ChEBI" id="CHEBI:17596"/>
        <dbReference type="ChEBI" id="CHEBI:43474"/>
        <dbReference type="ChEBI" id="CHEBI:57720"/>
        <dbReference type="EC" id="2.4.2.1"/>
    </reaction>
    <physiologicalReaction direction="left-to-right" evidence="2">
        <dbReference type="Rhea" id="RHEA:27647"/>
    </physiologicalReaction>
</comment>
<comment type="catalytic activity">
    <reaction evidence="2">
        <text>adenosine + H2O + H(+) = inosine + NH4(+)</text>
        <dbReference type="Rhea" id="RHEA:24408"/>
        <dbReference type="ChEBI" id="CHEBI:15377"/>
        <dbReference type="ChEBI" id="CHEBI:15378"/>
        <dbReference type="ChEBI" id="CHEBI:16335"/>
        <dbReference type="ChEBI" id="CHEBI:17596"/>
        <dbReference type="ChEBI" id="CHEBI:28938"/>
        <dbReference type="EC" id="3.5.4.4"/>
    </reaction>
    <physiologicalReaction direction="left-to-right" evidence="2">
        <dbReference type="Rhea" id="RHEA:24409"/>
    </physiologicalReaction>
</comment>
<comment type="cofactor">
    <cofactor evidence="1">
        <name>Cu(2+)</name>
        <dbReference type="ChEBI" id="CHEBI:29036"/>
    </cofactor>
    <cofactor evidence="2">
        <name>Zn(2+)</name>
        <dbReference type="ChEBI" id="CHEBI:29105"/>
    </cofactor>
</comment>
<comment type="subunit">
    <text evidence="3">Homodimer.</text>
</comment>
<comment type="similarity">
    <text evidence="4">Belongs to the purine nucleoside phosphorylase YfiH/LACC1 family.</text>
</comment>
<accession>P45497</accession>
<accession>Q9S2X0</accession>